<organism>
    <name type="scientific">Nostoc sp. (strain PCC 7120 / SAG 25.82 / UTEX 2576)</name>
    <dbReference type="NCBI Taxonomy" id="103690"/>
    <lineage>
        <taxon>Bacteria</taxon>
        <taxon>Bacillati</taxon>
        <taxon>Cyanobacteriota</taxon>
        <taxon>Cyanophyceae</taxon>
        <taxon>Nostocales</taxon>
        <taxon>Nostocaceae</taxon>
        <taxon>Nostoc</taxon>
    </lineage>
</organism>
<gene>
    <name evidence="1" type="primary">rplW</name>
    <name evidence="1" type="synonym">rpl23</name>
    <name type="ordered locus">all4213</name>
</gene>
<proteinExistence type="inferred from homology"/>
<sequence>MAKFDPRNLPDLVRRPILTEKATIMMEQNKYTFEVTPKASKPQIRAAIEDLFQVKVVKVNTALPPRRKKRVGKFIGFKPQYKKAIVTIAPGDVDKIRQVLFPEV</sequence>
<dbReference type="EMBL" id="BA000019">
    <property type="protein sequence ID" value="BAB75912.1"/>
    <property type="molecule type" value="Genomic_DNA"/>
</dbReference>
<dbReference type="PIR" id="AF2332">
    <property type="entry name" value="AF2332"/>
</dbReference>
<dbReference type="RefSeq" id="WP_010998351.1">
    <property type="nucleotide sequence ID" value="NZ_RSCN01000010.1"/>
</dbReference>
<dbReference type="SMR" id="Q8YPI1"/>
<dbReference type="STRING" id="103690.gene:10496262"/>
<dbReference type="KEGG" id="ana:all4213"/>
<dbReference type="eggNOG" id="COG0089">
    <property type="taxonomic scope" value="Bacteria"/>
</dbReference>
<dbReference type="OrthoDB" id="9793353at2"/>
<dbReference type="Proteomes" id="UP000002483">
    <property type="component" value="Chromosome"/>
</dbReference>
<dbReference type="GO" id="GO:1990904">
    <property type="term" value="C:ribonucleoprotein complex"/>
    <property type="evidence" value="ECO:0007669"/>
    <property type="project" value="UniProtKB-KW"/>
</dbReference>
<dbReference type="GO" id="GO:0005840">
    <property type="term" value="C:ribosome"/>
    <property type="evidence" value="ECO:0007669"/>
    <property type="project" value="UniProtKB-KW"/>
</dbReference>
<dbReference type="GO" id="GO:0019843">
    <property type="term" value="F:rRNA binding"/>
    <property type="evidence" value="ECO:0007669"/>
    <property type="project" value="UniProtKB-UniRule"/>
</dbReference>
<dbReference type="GO" id="GO:0003735">
    <property type="term" value="F:structural constituent of ribosome"/>
    <property type="evidence" value="ECO:0007669"/>
    <property type="project" value="InterPro"/>
</dbReference>
<dbReference type="GO" id="GO:0006412">
    <property type="term" value="P:translation"/>
    <property type="evidence" value="ECO:0007669"/>
    <property type="project" value="UniProtKB-UniRule"/>
</dbReference>
<dbReference type="FunFam" id="3.30.70.330:FF:000001">
    <property type="entry name" value="50S ribosomal protein L23"/>
    <property type="match status" value="1"/>
</dbReference>
<dbReference type="Gene3D" id="3.30.70.330">
    <property type="match status" value="1"/>
</dbReference>
<dbReference type="HAMAP" id="MF_01369_B">
    <property type="entry name" value="Ribosomal_uL23_B"/>
    <property type="match status" value="1"/>
</dbReference>
<dbReference type="InterPro" id="IPR012677">
    <property type="entry name" value="Nucleotide-bd_a/b_plait_sf"/>
</dbReference>
<dbReference type="InterPro" id="IPR013025">
    <property type="entry name" value="Ribosomal_uL23-like"/>
</dbReference>
<dbReference type="InterPro" id="IPR012678">
    <property type="entry name" value="Ribosomal_uL23/eL15/eS24_sf"/>
</dbReference>
<dbReference type="NCBIfam" id="NF004363">
    <property type="entry name" value="PRK05738.2-4"/>
    <property type="match status" value="1"/>
</dbReference>
<dbReference type="NCBIfam" id="NF004368">
    <property type="entry name" value="PRK05738.3-4"/>
    <property type="match status" value="1"/>
</dbReference>
<dbReference type="PANTHER" id="PTHR11620">
    <property type="entry name" value="60S RIBOSOMAL PROTEIN L23A"/>
    <property type="match status" value="1"/>
</dbReference>
<dbReference type="Pfam" id="PF00276">
    <property type="entry name" value="Ribosomal_L23"/>
    <property type="match status" value="1"/>
</dbReference>
<dbReference type="SUPFAM" id="SSF54189">
    <property type="entry name" value="Ribosomal proteins S24e, L23 and L15e"/>
    <property type="match status" value="1"/>
</dbReference>
<reference key="1">
    <citation type="journal article" date="2001" name="DNA Res.">
        <title>Complete genomic sequence of the filamentous nitrogen-fixing cyanobacterium Anabaena sp. strain PCC 7120.</title>
        <authorList>
            <person name="Kaneko T."/>
            <person name="Nakamura Y."/>
            <person name="Wolk C.P."/>
            <person name="Kuritz T."/>
            <person name="Sasamoto S."/>
            <person name="Watanabe A."/>
            <person name="Iriguchi M."/>
            <person name="Ishikawa A."/>
            <person name="Kawashima K."/>
            <person name="Kimura T."/>
            <person name="Kishida Y."/>
            <person name="Kohara M."/>
            <person name="Matsumoto M."/>
            <person name="Matsuno A."/>
            <person name="Muraki A."/>
            <person name="Nakazaki N."/>
            <person name="Shimpo S."/>
            <person name="Sugimoto M."/>
            <person name="Takazawa M."/>
            <person name="Yamada M."/>
            <person name="Yasuda M."/>
            <person name="Tabata S."/>
        </authorList>
    </citation>
    <scope>NUCLEOTIDE SEQUENCE [LARGE SCALE GENOMIC DNA]</scope>
    <source>
        <strain>PCC 7120 / SAG 25.82 / UTEX 2576</strain>
    </source>
</reference>
<feature type="chain" id="PRO_1000144525" description="Large ribosomal subunit protein uL23">
    <location>
        <begin position="1"/>
        <end position="104"/>
    </location>
</feature>
<name>RL23_NOSS1</name>
<protein>
    <recommendedName>
        <fullName evidence="1">Large ribosomal subunit protein uL23</fullName>
    </recommendedName>
    <alternativeName>
        <fullName evidence="2">50S ribosomal protein L23</fullName>
    </alternativeName>
</protein>
<accession>Q8YPI1</accession>
<evidence type="ECO:0000255" key="1">
    <source>
        <dbReference type="HAMAP-Rule" id="MF_01369"/>
    </source>
</evidence>
<evidence type="ECO:0000305" key="2"/>
<keyword id="KW-1185">Reference proteome</keyword>
<keyword id="KW-0687">Ribonucleoprotein</keyword>
<keyword id="KW-0689">Ribosomal protein</keyword>
<keyword id="KW-0694">RNA-binding</keyword>
<keyword id="KW-0699">rRNA-binding</keyword>
<comment type="function">
    <text evidence="1">One of the early assembly proteins it binds 23S rRNA. One of the proteins that surrounds the polypeptide exit tunnel on the outside of the ribosome. Forms the main docking site for trigger factor binding to the ribosome.</text>
</comment>
<comment type="subunit">
    <text evidence="1">Part of the 50S ribosomal subunit. Contacts protein L29, and trigger factor when it is bound to the ribosome.</text>
</comment>
<comment type="similarity">
    <text evidence="1">Belongs to the universal ribosomal protein uL23 family.</text>
</comment>